<accession>Q730M2</accession>
<name>DNAJ_BACC1</name>
<proteinExistence type="inferred from homology"/>
<dbReference type="EMBL" id="AE017194">
    <property type="protein sequence ID" value="AAS43295.1"/>
    <property type="molecule type" value="Genomic_DNA"/>
</dbReference>
<dbReference type="SMR" id="Q730M2"/>
<dbReference type="KEGG" id="bca:BCE_4394"/>
<dbReference type="HOGENOM" id="CLU_017633_0_7_9"/>
<dbReference type="Proteomes" id="UP000002527">
    <property type="component" value="Chromosome"/>
</dbReference>
<dbReference type="GO" id="GO:0005737">
    <property type="term" value="C:cytoplasm"/>
    <property type="evidence" value="ECO:0007669"/>
    <property type="project" value="UniProtKB-SubCell"/>
</dbReference>
<dbReference type="GO" id="GO:0005524">
    <property type="term" value="F:ATP binding"/>
    <property type="evidence" value="ECO:0007669"/>
    <property type="project" value="InterPro"/>
</dbReference>
<dbReference type="GO" id="GO:0031072">
    <property type="term" value="F:heat shock protein binding"/>
    <property type="evidence" value="ECO:0007669"/>
    <property type="project" value="InterPro"/>
</dbReference>
<dbReference type="GO" id="GO:0051082">
    <property type="term" value="F:unfolded protein binding"/>
    <property type="evidence" value="ECO:0007669"/>
    <property type="project" value="UniProtKB-UniRule"/>
</dbReference>
<dbReference type="GO" id="GO:0008270">
    <property type="term" value="F:zinc ion binding"/>
    <property type="evidence" value="ECO:0007669"/>
    <property type="project" value="UniProtKB-UniRule"/>
</dbReference>
<dbReference type="GO" id="GO:0051085">
    <property type="term" value="P:chaperone cofactor-dependent protein refolding"/>
    <property type="evidence" value="ECO:0007669"/>
    <property type="project" value="TreeGrafter"/>
</dbReference>
<dbReference type="GO" id="GO:0006260">
    <property type="term" value="P:DNA replication"/>
    <property type="evidence" value="ECO:0007669"/>
    <property type="project" value="UniProtKB-KW"/>
</dbReference>
<dbReference type="GO" id="GO:0042026">
    <property type="term" value="P:protein refolding"/>
    <property type="evidence" value="ECO:0007669"/>
    <property type="project" value="TreeGrafter"/>
</dbReference>
<dbReference type="GO" id="GO:0009408">
    <property type="term" value="P:response to heat"/>
    <property type="evidence" value="ECO:0007669"/>
    <property type="project" value="InterPro"/>
</dbReference>
<dbReference type="CDD" id="cd06257">
    <property type="entry name" value="DnaJ"/>
    <property type="match status" value="1"/>
</dbReference>
<dbReference type="CDD" id="cd10747">
    <property type="entry name" value="DnaJ_C"/>
    <property type="match status" value="1"/>
</dbReference>
<dbReference type="CDD" id="cd10719">
    <property type="entry name" value="DnaJ_zf"/>
    <property type="match status" value="1"/>
</dbReference>
<dbReference type="FunFam" id="1.10.287.110:FF:000031">
    <property type="entry name" value="Molecular chaperone DnaJ"/>
    <property type="match status" value="1"/>
</dbReference>
<dbReference type="FunFam" id="2.10.230.10:FF:000002">
    <property type="entry name" value="Molecular chaperone DnaJ"/>
    <property type="match status" value="1"/>
</dbReference>
<dbReference type="FunFam" id="2.60.260.20:FF:000004">
    <property type="entry name" value="Molecular chaperone DnaJ"/>
    <property type="match status" value="1"/>
</dbReference>
<dbReference type="FunFam" id="2.60.260.20:FF:000009">
    <property type="entry name" value="Putative Mitochondrial DnaJ chaperone"/>
    <property type="match status" value="1"/>
</dbReference>
<dbReference type="Gene3D" id="6.20.20.10">
    <property type="match status" value="2"/>
</dbReference>
<dbReference type="Gene3D" id="1.10.287.110">
    <property type="entry name" value="DnaJ domain"/>
    <property type="match status" value="1"/>
</dbReference>
<dbReference type="Gene3D" id="2.60.260.20">
    <property type="entry name" value="Urease metallochaperone UreE, N-terminal domain"/>
    <property type="match status" value="2"/>
</dbReference>
<dbReference type="HAMAP" id="MF_01152">
    <property type="entry name" value="DnaJ"/>
    <property type="match status" value="1"/>
</dbReference>
<dbReference type="InterPro" id="IPR012724">
    <property type="entry name" value="DnaJ"/>
</dbReference>
<dbReference type="InterPro" id="IPR002939">
    <property type="entry name" value="DnaJ_C"/>
</dbReference>
<dbReference type="InterPro" id="IPR001623">
    <property type="entry name" value="DnaJ_domain"/>
</dbReference>
<dbReference type="InterPro" id="IPR018253">
    <property type="entry name" value="DnaJ_domain_CS"/>
</dbReference>
<dbReference type="InterPro" id="IPR008971">
    <property type="entry name" value="HSP40/DnaJ_pept-bd"/>
</dbReference>
<dbReference type="InterPro" id="IPR001305">
    <property type="entry name" value="HSP_DnaJ_Cys-rich_dom"/>
</dbReference>
<dbReference type="InterPro" id="IPR036410">
    <property type="entry name" value="HSP_DnaJ_Cys-rich_dom_sf"/>
</dbReference>
<dbReference type="InterPro" id="IPR036869">
    <property type="entry name" value="J_dom_sf"/>
</dbReference>
<dbReference type="NCBIfam" id="TIGR02349">
    <property type="entry name" value="DnaJ_bact"/>
    <property type="match status" value="1"/>
</dbReference>
<dbReference type="NCBIfam" id="NF008035">
    <property type="entry name" value="PRK10767.1"/>
    <property type="match status" value="1"/>
</dbReference>
<dbReference type="NCBIfam" id="NF010873">
    <property type="entry name" value="PRK14280.1"/>
    <property type="match status" value="1"/>
</dbReference>
<dbReference type="PANTHER" id="PTHR43096:SF48">
    <property type="entry name" value="CHAPERONE PROTEIN DNAJ"/>
    <property type="match status" value="1"/>
</dbReference>
<dbReference type="PANTHER" id="PTHR43096">
    <property type="entry name" value="DNAJ HOMOLOG 1, MITOCHONDRIAL-RELATED"/>
    <property type="match status" value="1"/>
</dbReference>
<dbReference type="Pfam" id="PF00226">
    <property type="entry name" value="DnaJ"/>
    <property type="match status" value="1"/>
</dbReference>
<dbReference type="Pfam" id="PF01556">
    <property type="entry name" value="DnaJ_C"/>
    <property type="match status" value="1"/>
</dbReference>
<dbReference type="Pfam" id="PF00684">
    <property type="entry name" value="DnaJ_CXXCXGXG"/>
    <property type="match status" value="1"/>
</dbReference>
<dbReference type="PRINTS" id="PR00625">
    <property type="entry name" value="JDOMAIN"/>
</dbReference>
<dbReference type="SMART" id="SM00271">
    <property type="entry name" value="DnaJ"/>
    <property type="match status" value="1"/>
</dbReference>
<dbReference type="SUPFAM" id="SSF46565">
    <property type="entry name" value="Chaperone J-domain"/>
    <property type="match status" value="1"/>
</dbReference>
<dbReference type="SUPFAM" id="SSF57938">
    <property type="entry name" value="DnaJ/Hsp40 cysteine-rich domain"/>
    <property type="match status" value="1"/>
</dbReference>
<dbReference type="SUPFAM" id="SSF49493">
    <property type="entry name" value="HSP40/DnaJ peptide-binding domain"/>
    <property type="match status" value="2"/>
</dbReference>
<dbReference type="PROSITE" id="PS00636">
    <property type="entry name" value="DNAJ_1"/>
    <property type="match status" value="1"/>
</dbReference>
<dbReference type="PROSITE" id="PS50076">
    <property type="entry name" value="DNAJ_2"/>
    <property type="match status" value="1"/>
</dbReference>
<dbReference type="PROSITE" id="PS51188">
    <property type="entry name" value="ZF_CR"/>
    <property type="match status" value="1"/>
</dbReference>
<gene>
    <name evidence="1" type="primary">dnaJ</name>
    <name type="ordered locus">BCE_4394</name>
</gene>
<reference key="1">
    <citation type="journal article" date="2004" name="Nucleic Acids Res.">
        <title>The genome sequence of Bacillus cereus ATCC 10987 reveals metabolic adaptations and a large plasmid related to Bacillus anthracis pXO1.</title>
        <authorList>
            <person name="Rasko D.A."/>
            <person name="Ravel J."/>
            <person name="Oekstad O.A."/>
            <person name="Helgason E."/>
            <person name="Cer R.Z."/>
            <person name="Jiang L."/>
            <person name="Shores K.A."/>
            <person name="Fouts D.E."/>
            <person name="Tourasse N.J."/>
            <person name="Angiuoli S.V."/>
            <person name="Kolonay J.F."/>
            <person name="Nelson W.C."/>
            <person name="Kolstoe A.-B."/>
            <person name="Fraser C.M."/>
            <person name="Read T.D."/>
        </authorList>
    </citation>
    <scope>NUCLEOTIDE SEQUENCE [LARGE SCALE GENOMIC DNA]</scope>
    <source>
        <strain>ATCC 10987 / NRS 248</strain>
    </source>
</reference>
<evidence type="ECO:0000255" key="1">
    <source>
        <dbReference type="HAMAP-Rule" id="MF_01152"/>
    </source>
</evidence>
<protein>
    <recommendedName>
        <fullName evidence="1">Chaperone protein DnaJ</fullName>
    </recommendedName>
</protein>
<comment type="function">
    <text evidence="1">Participates actively in the response to hyperosmotic and heat shock by preventing the aggregation of stress-denatured proteins and by disaggregating proteins, also in an autonomous, DnaK-independent fashion. Unfolded proteins bind initially to DnaJ; upon interaction with the DnaJ-bound protein, DnaK hydrolyzes its bound ATP, resulting in the formation of a stable complex. GrpE releases ADP from DnaK; ATP binding to DnaK triggers the release of the substrate protein, thus completing the reaction cycle. Several rounds of ATP-dependent interactions between DnaJ, DnaK and GrpE are required for fully efficient folding. Also involved, together with DnaK and GrpE, in the DNA replication of plasmids through activation of initiation proteins.</text>
</comment>
<comment type="cofactor">
    <cofactor evidence="1">
        <name>Zn(2+)</name>
        <dbReference type="ChEBI" id="CHEBI:29105"/>
    </cofactor>
    <text evidence="1">Binds 2 Zn(2+) ions per monomer.</text>
</comment>
<comment type="subunit">
    <text evidence="1">Homodimer.</text>
</comment>
<comment type="subcellular location">
    <subcellularLocation>
        <location evidence="1">Cytoplasm</location>
    </subcellularLocation>
</comment>
<comment type="domain">
    <text evidence="1">The J domain is necessary and sufficient to stimulate DnaK ATPase activity. Zinc center 1 plays an important role in the autonomous, DnaK-independent chaperone activity of DnaJ. Zinc center 2 is essential for interaction with DnaK and for DnaJ activity.</text>
</comment>
<comment type="similarity">
    <text evidence="1">Belongs to the DnaJ family.</text>
</comment>
<organism>
    <name type="scientific">Bacillus cereus (strain ATCC 10987 / NRS 248)</name>
    <dbReference type="NCBI Taxonomy" id="222523"/>
    <lineage>
        <taxon>Bacteria</taxon>
        <taxon>Bacillati</taxon>
        <taxon>Bacillota</taxon>
        <taxon>Bacilli</taxon>
        <taxon>Bacillales</taxon>
        <taxon>Bacillaceae</taxon>
        <taxon>Bacillus</taxon>
        <taxon>Bacillus cereus group</taxon>
    </lineage>
</organism>
<keyword id="KW-0143">Chaperone</keyword>
<keyword id="KW-0963">Cytoplasm</keyword>
<keyword id="KW-0235">DNA replication</keyword>
<keyword id="KW-0479">Metal-binding</keyword>
<keyword id="KW-0677">Repeat</keyword>
<keyword id="KW-0346">Stress response</keyword>
<keyword id="KW-0862">Zinc</keyword>
<keyword id="KW-0863">Zinc-finger</keyword>
<sequence>MSKRDYYEVLGLSKGASKDEIKKAYRRLAKKYHPDVSKEENAIEKFKEVQEAYEVLSDDQKRAQYDQFGHAGANQGFGGFGGGGDFGGGFGFEDIFSSFFGGGGGRRRDPNAPRQGADLQYQVTLDFEEAIFGKELNVEIPVEDPCDTCKGSGAKPGTSKETCKHCSGSGQVSVEQNTPFGRIVNRQACGHCSGTGQIIKEKCTTCHGSGKVRKRKKINVKIPAGIDNGQQIRVSGKGEAGVNGGPAGDLYVVVHVRNHEFFEREGDHIICEMPLTFAQMALGDEVEVPTVHGKVKLKIPAGTQTGTEFRLKGKGAPNVRGYGQGDQYVVVRVVVPTKLTSQQKDLLREFAGQEEQDDSLFGKLKRAFKGE</sequence>
<feature type="chain" id="PRO_0000070716" description="Chaperone protein DnaJ">
    <location>
        <begin position="1"/>
        <end position="371"/>
    </location>
</feature>
<feature type="domain" description="J" evidence="1">
    <location>
        <begin position="5"/>
        <end position="69"/>
    </location>
</feature>
<feature type="repeat" description="CXXCXGXG motif">
    <location>
        <begin position="146"/>
        <end position="153"/>
    </location>
</feature>
<feature type="repeat" description="CXXCXGXG motif">
    <location>
        <begin position="163"/>
        <end position="170"/>
    </location>
</feature>
<feature type="repeat" description="CXXCXGXG motif">
    <location>
        <begin position="189"/>
        <end position="196"/>
    </location>
</feature>
<feature type="repeat" description="CXXCXGXG motif">
    <location>
        <begin position="203"/>
        <end position="210"/>
    </location>
</feature>
<feature type="zinc finger region" description="CR-type" evidence="1">
    <location>
        <begin position="133"/>
        <end position="215"/>
    </location>
</feature>
<feature type="binding site" evidence="1">
    <location>
        <position position="146"/>
    </location>
    <ligand>
        <name>Zn(2+)</name>
        <dbReference type="ChEBI" id="CHEBI:29105"/>
        <label>1</label>
    </ligand>
</feature>
<feature type="binding site" evidence="1">
    <location>
        <position position="149"/>
    </location>
    <ligand>
        <name>Zn(2+)</name>
        <dbReference type="ChEBI" id="CHEBI:29105"/>
        <label>1</label>
    </ligand>
</feature>
<feature type="binding site" evidence="1">
    <location>
        <position position="163"/>
    </location>
    <ligand>
        <name>Zn(2+)</name>
        <dbReference type="ChEBI" id="CHEBI:29105"/>
        <label>2</label>
    </ligand>
</feature>
<feature type="binding site" evidence="1">
    <location>
        <position position="166"/>
    </location>
    <ligand>
        <name>Zn(2+)</name>
        <dbReference type="ChEBI" id="CHEBI:29105"/>
        <label>2</label>
    </ligand>
</feature>
<feature type="binding site" evidence="1">
    <location>
        <position position="189"/>
    </location>
    <ligand>
        <name>Zn(2+)</name>
        <dbReference type="ChEBI" id="CHEBI:29105"/>
        <label>2</label>
    </ligand>
</feature>
<feature type="binding site" evidence="1">
    <location>
        <position position="192"/>
    </location>
    <ligand>
        <name>Zn(2+)</name>
        <dbReference type="ChEBI" id="CHEBI:29105"/>
        <label>2</label>
    </ligand>
</feature>
<feature type="binding site" evidence="1">
    <location>
        <position position="203"/>
    </location>
    <ligand>
        <name>Zn(2+)</name>
        <dbReference type="ChEBI" id="CHEBI:29105"/>
        <label>1</label>
    </ligand>
</feature>
<feature type="binding site" evidence="1">
    <location>
        <position position="206"/>
    </location>
    <ligand>
        <name>Zn(2+)</name>
        <dbReference type="ChEBI" id="CHEBI:29105"/>
        <label>1</label>
    </ligand>
</feature>